<proteinExistence type="inferred from homology"/>
<comment type="function">
    <text evidence="1">NDH-1 shuttles electrons from NADH, via FMN and iron-sulfur (Fe-S) centers, to quinones in the respiratory chain. The immediate electron acceptor for the enzyme in this species is believed to be ubiquinone. Couples the redox reaction to proton translocation (for every two electrons transferred, four hydrogen ions are translocated across the cytoplasmic membrane), and thus conserves the redox energy in a proton gradient.</text>
</comment>
<comment type="catalytic activity">
    <reaction evidence="1">
        <text>a quinone + NADH + 5 H(+)(in) = a quinol + NAD(+) + 4 H(+)(out)</text>
        <dbReference type="Rhea" id="RHEA:57888"/>
        <dbReference type="ChEBI" id="CHEBI:15378"/>
        <dbReference type="ChEBI" id="CHEBI:24646"/>
        <dbReference type="ChEBI" id="CHEBI:57540"/>
        <dbReference type="ChEBI" id="CHEBI:57945"/>
        <dbReference type="ChEBI" id="CHEBI:132124"/>
    </reaction>
</comment>
<comment type="cofactor">
    <cofactor evidence="1">
        <name>[4Fe-4S] cluster</name>
        <dbReference type="ChEBI" id="CHEBI:49883"/>
    </cofactor>
    <text evidence="1">Binds 1 [4Fe-4S] cluster.</text>
</comment>
<comment type="subunit">
    <text evidence="1">NDH-1 is composed of 14 different subunits. Subunits NuoB, C, D, E, F, and G constitute the peripheral sector of the complex.</text>
</comment>
<comment type="subcellular location">
    <subcellularLocation>
        <location evidence="1">Cell inner membrane</location>
        <topology evidence="1">Peripheral membrane protein</topology>
        <orientation evidence="1">Cytoplasmic side</orientation>
    </subcellularLocation>
</comment>
<comment type="similarity">
    <text evidence="1">Belongs to the complex I 20 kDa subunit family.</text>
</comment>
<dbReference type="EC" id="7.1.1.-" evidence="1"/>
<dbReference type="EMBL" id="CP001011">
    <property type="protein sequence ID" value="ACB91692.1"/>
    <property type="molecule type" value="Genomic_DNA"/>
</dbReference>
<dbReference type="RefSeq" id="WP_004087937.1">
    <property type="nucleotide sequence ID" value="NC_010577.1"/>
</dbReference>
<dbReference type="SMR" id="B2I785"/>
<dbReference type="KEGG" id="xfn:XfasM23_0241"/>
<dbReference type="HOGENOM" id="CLU_055737_7_3_6"/>
<dbReference type="Proteomes" id="UP000001698">
    <property type="component" value="Chromosome"/>
</dbReference>
<dbReference type="GO" id="GO:0005886">
    <property type="term" value="C:plasma membrane"/>
    <property type="evidence" value="ECO:0007669"/>
    <property type="project" value="UniProtKB-SubCell"/>
</dbReference>
<dbReference type="GO" id="GO:0045271">
    <property type="term" value="C:respiratory chain complex I"/>
    <property type="evidence" value="ECO:0007669"/>
    <property type="project" value="TreeGrafter"/>
</dbReference>
<dbReference type="GO" id="GO:0051539">
    <property type="term" value="F:4 iron, 4 sulfur cluster binding"/>
    <property type="evidence" value="ECO:0007669"/>
    <property type="project" value="UniProtKB-KW"/>
</dbReference>
<dbReference type="GO" id="GO:0005506">
    <property type="term" value="F:iron ion binding"/>
    <property type="evidence" value="ECO:0007669"/>
    <property type="project" value="UniProtKB-UniRule"/>
</dbReference>
<dbReference type="GO" id="GO:0008137">
    <property type="term" value="F:NADH dehydrogenase (ubiquinone) activity"/>
    <property type="evidence" value="ECO:0007669"/>
    <property type="project" value="InterPro"/>
</dbReference>
<dbReference type="GO" id="GO:0050136">
    <property type="term" value="F:NADH:ubiquinone reductase (non-electrogenic) activity"/>
    <property type="evidence" value="ECO:0007669"/>
    <property type="project" value="UniProtKB-UniRule"/>
</dbReference>
<dbReference type="GO" id="GO:0048038">
    <property type="term" value="F:quinone binding"/>
    <property type="evidence" value="ECO:0007669"/>
    <property type="project" value="UniProtKB-KW"/>
</dbReference>
<dbReference type="GO" id="GO:0009060">
    <property type="term" value="P:aerobic respiration"/>
    <property type="evidence" value="ECO:0007669"/>
    <property type="project" value="TreeGrafter"/>
</dbReference>
<dbReference type="GO" id="GO:0015990">
    <property type="term" value="P:electron transport coupled proton transport"/>
    <property type="evidence" value="ECO:0007669"/>
    <property type="project" value="TreeGrafter"/>
</dbReference>
<dbReference type="FunFam" id="3.40.50.12280:FF:000001">
    <property type="entry name" value="NADH-quinone oxidoreductase subunit B 2"/>
    <property type="match status" value="1"/>
</dbReference>
<dbReference type="Gene3D" id="3.40.50.12280">
    <property type="match status" value="1"/>
</dbReference>
<dbReference type="HAMAP" id="MF_01356">
    <property type="entry name" value="NDH1_NuoB"/>
    <property type="match status" value="1"/>
</dbReference>
<dbReference type="InterPro" id="IPR006137">
    <property type="entry name" value="NADH_UbQ_OxRdtase-like_20kDa"/>
</dbReference>
<dbReference type="InterPro" id="IPR006138">
    <property type="entry name" value="NADH_UQ_OxRdtase_20Kd_su"/>
</dbReference>
<dbReference type="NCBIfam" id="TIGR01957">
    <property type="entry name" value="nuoB_fam"/>
    <property type="match status" value="1"/>
</dbReference>
<dbReference type="NCBIfam" id="NF005012">
    <property type="entry name" value="PRK06411.1"/>
    <property type="match status" value="1"/>
</dbReference>
<dbReference type="PANTHER" id="PTHR11995">
    <property type="entry name" value="NADH DEHYDROGENASE"/>
    <property type="match status" value="1"/>
</dbReference>
<dbReference type="PANTHER" id="PTHR11995:SF14">
    <property type="entry name" value="NADH DEHYDROGENASE [UBIQUINONE] IRON-SULFUR PROTEIN 7, MITOCHONDRIAL"/>
    <property type="match status" value="1"/>
</dbReference>
<dbReference type="Pfam" id="PF01058">
    <property type="entry name" value="Oxidored_q6"/>
    <property type="match status" value="1"/>
</dbReference>
<dbReference type="SUPFAM" id="SSF56770">
    <property type="entry name" value="HydA/Nqo6-like"/>
    <property type="match status" value="1"/>
</dbReference>
<dbReference type="PROSITE" id="PS01150">
    <property type="entry name" value="COMPLEX1_20K"/>
    <property type="match status" value="1"/>
</dbReference>
<evidence type="ECO:0000255" key="1">
    <source>
        <dbReference type="HAMAP-Rule" id="MF_01356"/>
    </source>
</evidence>
<feature type="chain" id="PRO_0000376407" description="NADH-quinone oxidoreductase subunit B">
    <location>
        <begin position="1"/>
        <end position="184"/>
    </location>
</feature>
<feature type="binding site" evidence="1">
    <location>
        <position position="63"/>
    </location>
    <ligand>
        <name>[4Fe-4S] cluster</name>
        <dbReference type="ChEBI" id="CHEBI:49883"/>
    </ligand>
</feature>
<feature type="binding site" evidence="1">
    <location>
        <position position="64"/>
    </location>
    <ligand>
        <name>[4Fe-4S] cluster</name>
        <dbReference type="ChEBI" id="CHEBI:49883"/>
    </ligand>
</feature>
<feature type="binding site" evidence="1">
    <location>
        <position position="128"/>
    </location>
    <ligand>
        <name>[4Fe-4S] cluster</name>
        <dbReference type="ChEBI" id="CHEBI:49883"/>
    </ligand>
</feature>
<feature type="binding site" evidence="1">
    <location>
        <position position="158"/>
    </location>
    <ligand>
        <name>[4Fe-4S] cluster</name>
        <dbReference type="ChEBI" id="CHEBI:49883"/>
    </ligand>
</feature>
<name>NUOB_XYLF2</name>
<sequence length="184" mass="20196">MGVIQAIDRLMTNPIPDGQVDDILRPQGESPLLQKGYVTTSVDALLNWARTGSMWPMTFGLACCAVEMMHAGAARLDLDRYGIVFRPSPRQSDVMIVAGTLVNKMAPALRKVYDQMPDPKWVISMGSCANGGGYYHYSYSVVRGCDRIVPVDVYVPGCPPTAEALVYGILQLQKKIWRTKTIAG</sequence>
<protein>
    <recommendedName>
        <fullName evidence="1">NADH-quinone oxidoreductase subunit B</fullName>
        <ecNumber evidence="1">7.1.1.-</ecNumber>
    </recommendedName>
    <alternativeName>
        <fullName evidence="1">NADH dehydrogenase I subunit B</fullName>
    </alternativeName>
    <alternativeName>
        <fullName evidence="1">NDH-1 subunit B</fullName>
    </alternativeName>
</protein>
<accession>B2I785</accession>
<reference key="1">
    <citation type="journal article" date="2010" name="J. Bacteriol.">
        <title>Whole genome sequences of two Xylella fastidiosa strains (M12 and M23) causing almond leaf scorch disease in California.</title>
        <authorList>
            <person name="Chen J."/>
            <person name="Xie G."/>
            <person name="Han S."/>
            <person name="Chertkov O."/>
            <person name="Sims D."/>
            <person name="Civerolo E.L."/>
        </authorList>
    </citation>
    <scope>NUCLEOTIDE SEQUENCE [LARGE SCALE GENOMIC DNA]</scope>
    <source>
        <strain>M23</strain>
    </source>
</reference>
<gene>
    <name evidence="1" type="primary">nuoB</name>
    <name type="ordered locus">XfasM23_0241</name>
</gene>
<organism>
    <name type="scientific">Xylella fastidiosa (strain M23)</name>
    <dbReference type="NCBI Taxonomy" id="405441"/>
    <lineage>
        <taxon>Bacteria</taxon>
        <taxon>Pseudomonadati</taxon>
        <taxon>Pseudomonadota</taxon>
        <taxon>Gammaproteobacteria</taxon>
        <taxon>Lysobacterales</taxon>
        <taxon>Lysobacteraceae</taxon>
        <taxon>Xylella</taxon>
    </lineage>
</organism>
<keyword id="KW-0004">4Fe-4S</keyword>
<keyword id="KW-0997">Cell inner membrane</keyword>
<keyword id="KW-1003">Cell membrane</keyword>
<keyword id="KW-0408">Iron</keyword>
<keyword id="KW-0411">Iron-sulfur</keyword>
<keyword id="KW-0472">Membrane</keyword>
<keyword id="KW-0479">Metal-binding</keyword>
<keyword id="KW-0520">NAD</keyword>
<keyword id="KW-0874">Quinone</keyword>
<keyword id="KW-1278">Translocase</keyword>
<keyword id="KW-0813">Transport</keyword>
<keyword id="KW-0830">Ubiquinone</keyword>